<gene>
    <name evidence="1" type="primary">rpl37ae</name>
    <name type="ordered locus">PAE2202</name>
</gene>
<evidence type="ECO:0000255" key="1">
    <source>
        <dbReference type="HAMAP-Rule" id="MF_00327"/>
    </source>
</evidence>
<evidence type="ECO:0000305" key="2"/>
<name>RL37A_PYRAE</name>
<feature type="chain" id="PRO_0000139850" description="Large ribosomal subunit protein eL43">
    <location>
        <begin position="1"/>
        <end position="101"/>
    </location>
</feature>
<feature type="zinc finger region" description="C4-type" evidence="1">
    <location>
        <begin position="40"/>
        <end position="62"/>
    </location>
</feature>
<feature type="binding site" evidence="1">
    <location>
        <position position="40"/>
    </location>
    <ligand>
        <name>Zn(2+)</name>
        <dbReference type="ChEBI" id="CHEBI:29105"/>
    </ligand>
</feature>
<feature type="binding site" evidence="1">
    <location>
        <position position="43"/>
    </location>
    <ligand>
        <name>Zn(2+)</name>
        <dbReference type="ChEBI" id="CHEBI:29105"/>
    </ligand>
</feature>
<feature type="binding site" evidence="1">
    <location>
        <position position="59"/>
    </location>
    <ligand>
        <name>Zn(2+)</name>
        <dbReference type="ChEBI" id="CHEBI:29105"/>
    </ligand>
</feature>
<feature type="binding site" evidence="1">
    <location>
        <position position="62"/>
    </location>
    <ligand>
        <name>Zn(2+)</name>
        <dbReference type="ChEBI" id="CHEBI:29105"/>
    </ligand>
</feature>
<protein>
    <recommendedName>
        <fullName evidence="1">Large ribosomal subunit protein eL43</fullName>
    </recommendedName>
    <alternativeName>
        <fullName evidence="2">50S ribosomal protein L37Ae</fullName>
    </alternativeName>
    <alternativeName>
        <fullName evidence="1">Ribosomal protein L43e</fullName>
    </alternativeName>
</protein>
<proteinExistence type="inferred from homology"/>
<sequence length="101" mass="11317">MPFSHTKIVGPAGRYGARYGMGLRRKVTAIEVKQRGKHRCPSCRSLVRLERIAFGIWRCPKCGFTFAGGAWTPQTIMGKALAPEELKEVEAQKAKWKEAVK</sequence>
<reference key="1">
    <citation type="journal article" date="2002" name="Proc. Natl. Acad. Sci. U.S.A.">
        <title>Genome sequence of the hyperthermophilic crenarchaeon Pyrobaculum aerophilum.</title>
        <authorList>
            <person name="Fitz-Gibbon S.T."/>
            <person name="Ladner H."/>
            <person name="Kim U.-J."/>
            <person name="Stetter K.O."/>
            <person name="Simon M.I."/>
            <person name="Miller J.H."/>
        </authorList>
    </citation>
    <scope>NUCLEOTIDE SEQUENCE [LARGE SCALE GENOMIC DNA]</scope>
    <source>
        <strain>ATCC 51768 / DSM 7523 / JCM 9630 / CIP 104966 / NBRC 100827 / IM2</strain>
    </source>
</reference>
<accession>Q8ZVN1</accession>
<organism>
    <name type="scientific">Pyrobaculum aerophilum (strain ATCC 51768 / DSM 7523 / JCM 9630 / CIP 104966 / NBRC 100827 / IM2)</name>
    <dbReference type="NCBI Taxonomy" id="178306"/>
    <lineage>
        <taxon>Archaea</taxon>
        <taxon>Thermoproteota</taxon>
        <taxon>Thermoprotei</taxon>
        <taxon>Thermoproteales</taxon>
        <taxon>Thermoproteaceae</taxon>
        <taxon>Pyrobaculum</taxon>
    </lineage>
</organism>
<dbReference type="EMBL" id="AE009441">
    <property type="protein sequence ID" value="AAL64025.1"/>
    <property type="status" value="ALT_INIT"/>
    <property type="molecule type" value="Genomic_DNA"/>
</dbReference>
<dbReference type="RefSeq" id="WP_116421403.1">
    <property type="nucleotide sequence ID" value="NC_003364.1"/>
</dbReference>
<dbReference type="SMR" id="Q8ZVN1"/>
<dbReference type="FunCoup" id="Q8ZVN1">
    <property type="interactions" value="157"/>
</dbReference>
<dbReference type="STRING" id="178306.PAE2202"/>
<dbReference type="EnsemblBacteria" id="AAL64025">
    <property type="protein sequence ID" value="AAL64025"/>
    <property type="gene ID" value="PAE2202"/>
</dbReference>
<dbReference type="GeneID" id="1464359"/>
<dbReference type="KEGG" id="pai:PAE2202"/>
<dbReference type="PATRIC" id="fig|178306.9.peg.1636"/>
<dbReference type="eggNOG" id="arCOG04208">
    <property type="taxonomic scope" value="Archaea"/>
</dbReference>
<dbReference type="HOGENOM" id="CLU_141199_2_0_2"/>
<dbReference type="InParanoid" id="Q8ZVN1"/>
<dbReference type="Proteomes" id="UP000002439">
    <property type="component" value="Chromosome"/>
</dbReference>
<dbReference type="GO" id="GO:1990904">
    <property type="term" value="C:ribonucleoprotein complex"/>
    <property type="evidence" value="ECO:0007669"/>
    <property type="project" value="UniProtKB-KW"/>
</dbReference>
<dbReference type="GO" id="GO:0005840">
    <property type="term" value="C:ribosome"/>
    <property type="evidence" value="ECO:0007669"/>
    <property type="project" value="UniProtKB-KW"/>
</dbReference>
<dbReference type="GO" id="GO:0070180">
    <property type="term" value="F:large ribosomal subunit rRNA binding"/>
    <property type="evidence" value="ECO:0007669"/>
    <property type="project" value="UniProtKB-UniRule"/>
</dbReference>
<dbReference type="GO" id="GO:0003735">
    <property type="term" value="F:structural constituent of ribosome"/>
    <property type="evidence" value="ECO:0007669"/>
    <property type="project" value="InterPro"/>
</dbReference>
<dbReference type="GO" id="GO:0008270">
    <property type="term" value="F:zinc ion binding"/>
    <property type="evidence" value="ECO:0007669"/>
    <property type="project" value="UniProtKB-UniRule"/>
</dbReference>
<dbReference type="GO" id="GO:0006412">
    <property type="term" value="P:translation"/>
    <property type="evidence" value="ECO:0007669"/>
    <property type="project" value="UniProtKB-UniRule"/>
</dbReference>
<dbReference type="Gene3D" id="2.20.25.30">
    <property type="match status" value="1"/>
</dbReference>
<dbReference type="HAMAP" id="MF_00327">
    <property type="entry name" value="Ribosomal_eL43"/>
    <property type="match status" value="1"/>
</dbReference>
<dbReference type="InterPro" id="IPR011331">
    <property type="entry name" value="Ribosomal_eL37/eL43"/>
</dbReference>
<dbReference type="InterPro" id="IPR002674">
    <property type="entry name" value="Ribosomal_eL43"/>
</dbReference>
<dbReference type="InterPro" id="IPR050522">
    <property type="entry name" value="Ribosomal_protein_eL43"/>
</dbReference>
<dbReference type="InterPro" id="IPR011332">
    <property type="entry name" value="Ribosomal_zn-bd"/>
</dbReference>
<dbReference type="NCBIfam" id="NF003058">
    <property type="entry name" value="PRK03976.1"/>
    <property type="match status" value="1"/>
</dbReference>
<dbReference type="PANTHER" id="PTHR48129">
    <property type="entry name" value="60S RIBOSOMAL PROTEIN L37A"/>
    <property type="match status" value="1"/>
</dbReference>
<dbReference type="PANTHER" id="PTHR48129:SF1">
    <property type="entry name" value="LARGE RIBOSOMAL SUBUNIT PROTEIN EL43"/>
    <property type="match status" value="1"/>
</dbReference>
<dbReference type="Pfam" id="PF01780">
    <property type="entry name" value="Ribosomal_L37ae"/>
    <property type="match status" value="1"/>
</dbReference>
<dbReference type="SUPFAM" id="SSF57829">
    <property type="entry name" value="Zn-binding ribosomal proteins"/>
    <property type="match status" value="1"/>
</dbReference>
<keyword id="KW-0479">Metal-binding</keyword>
<keyword id="KW-1185">Reference proteome</keyword>
<keyword id="KW-0687">Ribonucleoprotein</keyword>
<keyword id="KW-0689">Ribosomal protein</keyword>
<keyword id="KW-0694">RNA-binding</keyword>
<keyword id="KW-0699">rRNA-binding</keyword>
<keyword id="KW-0862">Zinc</keyword>
<keyword id="KW-0863">Zinc-finger</keyword>
<comment type="function">
    <text evidence="1">Binds to the 23S rRNA.</text>
</comment>
<comment type="cofactor">
    <cofactor evidence="1">
        <name>Zn(2+)</name>
        <dbReference type="ChEBI" id="CHEBI:29105"/>
    </cofactor>
    <text evidence="1">Binds 1 zinc ion per subunit.</text>
</comment>
<comment type="subunit">
    <text evidence="1">Part of the 50S ribosomal subunit.</text>
</comment>
<comment type="similarity">
    <text evidence="1">Belongs to the eukaryotic ribosomal protein eL43 family. Putative zinc-binding subfamily.</text>
</comment>
<comment type="sequence caution" evidence="2">
    <conflict type="erroneous initiation">
        <sequence resource="EMBL-CDS" id="AAL64025"/>
    </conflict>
    <text>Extended N-terminus.</text>
</comment>